<feature type="chain" id="PRO_1000079406" description="Small ribosomal subunit protein bS21">
    <location>
        <begin position="1"/>
        <end position="71"/>
    </location>
</feature>
<feature type="region of interest" description="Disordered" evidence="2">
    <location>
        <begin position="43"/>
        <end position="71"/>
    </location>
</feature>
<feature type="compositionally biased region" description="Basic residues" evidence="2">
    <location>
        <begin position="46"/>
        <end position="59"/>
    </location>
</feature>
<feature type="compositionally biased region" description="Basic and acidic residues" evidence="2">
    <location>
        <begin position="60"/>
        <end position="71"/>
    </location>
</feature>
<dbReference type="EMBL" id="CP000946">
    <property type="protein sequence ID" value="ACA76310.1"/>
    <property type="molecule type" value="Genomic_DNA"/>
</dbReference>
<dbReference type="RefSeq" id="WP_001144069.1">
    <property type="nucleotide sequence ID" value="NZ_MTFT01000027.1"/>
</dbReference>
<dbReference type="SMR" id="B1IRQ1"/>
<dbReference type="GeneID" id="98390195"/>
<dbReference type="KEGG" id="ecl:EcolC_0634"/>
<dbReference type="HOGENOM" id="CLU_159258_1_0_6"/>
<dbReference type="GO" id="GO:1990904">
    <property type="term" value="C:ribonucleoprotein complex"/>
    <property type="evidence" value="ECO:0007669"/>
    <property type="project" value="UniProtKB-KW"/>
</dbReference>
<dbReference type="GO" id="GO:0005840">
    <property type="term" value="C:ribosome"/>
    <property type="evidence" value="ECO:0007669"/>
    <property type="project" value="UniProtKB-KW"/>
</dbReference>
<dbReference type="GO" id="GO:0003735">
    <property type="term" value="F:structural constituent of ribosome"/>
    <property type="evidence" value="ECO:0007669"/>
    <property type="project" value="InterPro"/>
</dbReference>
<dbReference type="GO" id="GO:0006412">
    <property type="term" value="P:translation"/>
    <property type="evidence" value="ECO:0007669"/>
    <property type="project" value="UniProtKB-UniRule"/>
</dbReference>
<dbReference type="FunFam" id="1.20.5.1150:FF:000001">
    <property type="entry name" value="30S ribosomal protein S21"/>
    <property type="match status" value="1"/>
</dbReference>
<dbReference type="Gene3D" id="1.20.5.1150">
    <property type="entry name" value="Ribosomal protein S8"/>
    <property type="match status" value="1"/>
</dbReference>
<dbReference type="HAMAP" id="MF_00358">
    <property type="entry name" value="Ribosomal_bS21"/>
    <property type="match status" value="1"/>
</dbReference>
<dbReference type="InterPro" id="IPR001911">
    <property type="entry name" value="Ribosomal_bS21"/>
</dbReference>
<dbReference type="InterPro" id="IPR018278">
    <property type="entry name" value="Ribosomal_bS21_CS"/>
</dbReference>
<dbReference type="InterPro" id="IPR038380">
    <property type="entry name" value="Ribosomal_bS21_sf"/>
</dbReference>
<dbReference type="NCBIfam" id="TIGR00030">
    <property type="entry name" value="S21p"/>
    <property type="match status" value="1"/>
</dbReference>
<dbReference type="PANTHER" id="PTHR21109">
    <property type="entry name" value="MITOCHONDRIAL 28S RIBOSOMAL PROTEIN S21"/>
    <property type="match status" value="1"/>
</dbReference>
<dbReference type="PANTHER" id="PTHR21109:SF22">
    <property type="entry name" value="SMALL RIBOSOMAL SUBUNIT PROTEIN BS21"/>
    <property type="match status" value="1"/>
</dbReference>
<dbReference type="Pfam" id="PF01165">
    <property type="entry name" value="Ribosomal_S21"/>
    <property type="match status" value="1"/>
</dbReference>
<dbReference type="PRINTS" id="PR00976">
    <property type="entry name" value="RIBOSOMALS21"/>
</dbReference>
<dbReference type="PROSITE" id="PS01181">
    <property type="entry name" value="RIBOSOMAL_S21"/>
    <property type="match status" value="1"/>
</dbReference>
<organism>
    <name type="scientific">Escherichia coli (strain ATCC 8739 / DSM 1576 / NBRC 3972 / NCIMB 8545 / WDCM 00012 / Crooks)</name>
    <dbReference type="NCBI Taxonomy" id="481805"/>
    <lineage>
        <taxon>Bacteria</taxon>
        <taxon>Pseudomonadati</taxon>
        <taxon>Pseudomonadota</taxon>
        <taxon>Gammaproteobacteria</taxon>
        <taxon>Enterobacterales</taxon>
        <taxon>Enterobacteriaceae</taxon>
        <taxon>Escherichia</taxon>
    </lineage>
</organism>
<sequence>MPVIKVRENEPFDVALRRFKRSCEKAGVLAEVRRREFYEKPTTERKRAKASAVKRHAKKLARENARRTRLY</sequence>
<reference key="1">
    <citation type="submission" date="2008-02" db="EMBL/GenBank/DDBJ databases">
        <title>Complete sequence of Escherichia coli C str. ATCC 8739.</title>
        <authorList>
            <person name="Copeland A."/>
            <person name="Lucas S."/>
            <person name="Lapidus A."/>
            <person name="Glavina del Rio T."/>
            <person name="Dalin E."/>
            <person name="Tice H."/>
            <person name="Bruce D."/>
            <person name="Goodwin L."/>
            <person name="Pitluck S."/>
            <person name="Kiss H."/>
            <person name="Brettin T."/>
            <person name="Detter J.C."/>
            <person name="Han C."/>
            <person name="Kuske C.R."/>
            <person name="Schmutz J."/>
            <person name="Larimer F."/>
            <person name="Land M."/>
            <person name="Hauser L."/>
            <person name="Kyrpides N."/>
            <person name="Mikhailova N."/>
            <person name="Ingram L."/>
            <person name="Richardson P."/>
        </authorList>
    </citation>
    <scope>NUCLEOTIDE SEQUENCE [LARGE SCALE GENOMIC DNA]</scope>
    <source>
        <strain>ATCC 8739 / DSM 1576 / NBRC 3972 / NCIMB 8545 / WDCM 00012 / Crooks</strain>
    </source>
</reference>
<accession>B1IRQ1</accession>
<gene>
    <name evidence="1" type="primary">rpsU</name>
    <name type="ordered locus">EcolC_0634</name>
</gene>
<keyword id="KW-0687">Ribonucleoprotein</keyword>
<keyword id="KW-0689">Ribosomal protein</keyword>
<name>RS21_ECOLC</name>
<comment type="similarity">
    <text evidence="1">Belongs to the bacterial ribosomal protein bS21 family.</text>
</comment>
<protein>
    <recommendedName>
        <fullName evidence="1">Small ribosomal subunit protein bS21</fullName>
    </recommendedName>
    <alternativeName>
        <fullName evidence="3">30S ribosomal protein S21</fullName>
    </alternativeName>
</protein>
<proteinExistence type="inferred from homology"/>
<evidence type="ECO:0000255" key="1">
    <source>
        <dbReference type="HAMAP-Rule" id="MF_00358"/>
    </source>
</evidence>
<evidence type="ECO:0000256" key="2">
    <source>
        <dbReference type="SAM" id="MobiDB-lite"/>
    </source>
</evidence>
<evidence type="ECO:0000305" key="3"/>